<protein>
    <recommendedName>
        <fullName>Anaphase-promoting complex subunit 2</fullName>
        <shortName>APC2</shortName>
    </recommendedName>
    <alternativeName>
        <fullName>Cyclosome subunit 2</fullName>
    </alternativeName>
</protein>
<feature type="chain" id="PRO_0000119812" description="Anaphase-promoting complex subunit 2">
    <location>
        <begin position="1"/>
        <end position="837"/>
    </location>
</feature>
<feature type="region of interest" description="Disordered" evidence="3">
    <location>
        <begin position="478"/>
        <end position="508"/>
    </location>
</feature>
<feature type="compositionally biased region" description="Acidic residues" evidence="3">
    <location>
        <begin position="483"/>
        <end position="496"/>
    </location>
</feature>
<feature type="modified residue" description="Phosphoserine" evidence="1">
    <location>
        <position position="233"/>
    </location>
</feature>
<feature type="modified residue" description="Phosphoserine" evidence="1">
    <location>
        <position position="329"/>
    </location>
</feature>
<feature type="modified residue" description="Phosphoserine" evidence="1">
    <location>
        <position position="485"/>
    </location>
</feature>
<feature type="modified residue" description="Phosphoserine" evidence="7">
    <location>
        <position position="549"/>
    </location>
</feature>
<feature type="modified residue" description="Phosphoserine" evidence="7">
    <location>
        <position position="712"/>
    </location>
</feature>
<feature type="modified residue" description="Phosphotyrosine" evidence="6">
    <location>
        <position position="825"/>
    </location>
</feature>
<feature type="sequence conflict" description="In Ref. 1; BAC28472." evidence="5" ref="1">
    <original>V</original>
    <variation>L</variation>
    <location>
        <position position="680"/>
    </location>
</feature>
<evidence type="ECO:0000250" key="1">
    <source>
        <dbReference type="UniProtKB" id="Q9UJX6"/>
    </source>
</evidence>
<evidence type="ECO:0000255" key="2">
    <source>
        <dbReference type="PROSITE-ProRule" id="PRU00330"/>
    </source>
</evidence>
<evidence type="ECO:0000256" key="3">
    <source>
        <dbReference type="SAM" id="MobiDB-lite"/>
    </source>
</evidence>
<evidence type="ECO:0000269" key="4">
    <source>
    </source>
</evidence>
<evidence type="ECO:0000305" key="5"/>
<evidence type="ECO:0007744" key="6">
    <source>
    </source>
</evidence>
<evidence type="ECO:0007744" key="7">
    <source>
    </source>
</evidence>
<proteinExistence type="evidence at protein level"/>
<gene>
    <name type="primary">Anapc2</name>
</gene>
<organism>
    <name type="scientific">Mus musculus</name>
    <name type="common">Mouse</name>
    <dbReference type="NCBI Taxonomy" id="10090"/>
    <lineage>
        <taxon>Eukaryota</taxon>
        <taxon>Metazoa</taxon>
        <taxon>Chordata</taxon>
        <taxon>Craniata</taxon>
        <taxon>Vertebrata</taxon>
        <taxon>Euteleostomi</taxon>
        <taxon>Mammalia</taxon>
        <taxon>Eutheria</taxon>
        <taxon>Euarchontoglires</taxon>
        <taxon>Glires</taxon>
        <taxon>Rodentia</taxon>
        <taxon>Myomorpha</taxon>
        <taxon>Muroidea</taxon>
        <taxon>Muridae</taxon>
        <taxon>Murinae</taxon>
        <taxon>Mus</taxon>
        <taxon>Mus</taxon>
    </lineage>
</organism>
<name>ANC2_MOUSE</name>
<comment type="function">
    <text evidence="1 4">Together with the RING-H2 protein ANAPC11, constitutes the catalytic component of the anaphase promoting complex/cyclosome (APC/C), a cell cycle-regulated E3 ubiquitin ligase that controls progression through mitosis and the G1 phase of the cell cycle (By similarity). The APC/C complex acts by mediating ubiquitination and subsequent degradation of target proteins: it mainly mediates the formation of 'Lys-11'-linked polyubiquitin chains and, to a lower extent, the formation of 'Lys-48'- and 'Lys-63'-linked polyubiquitin chains (By similarity). The APC/C complex catalyzes assembly of branched 'Lys-11'-/'Lys-48'-linked branched ubiquitin chains on target proteins (By similarity). The CDC20-APC/C complex positively regulates the formation of synaptic vesicle clustering at active zone to the presynaptic membrane in postmitotic neurons (PubMed:19900895). CDC20-APC/C-induced degradation of NEUROD2 drives presynaptic differentiation (PubMed:19900895).</text>
</comment>
<comment type="pathway">
    <text evidence="4">Protein modification; protein ubiquitination.</text>
</comment>
<comment type="subunit">
    <text evidence="1 4">The mammalian APC/C is composed at least of 14 distinct subunits ANAPC1, ANAPC2, CDC27/APC3, ANAPC4, ANAPC5, CDC16/APC6, ANAPC7, CDC23/APC8, ANAPC10, ANAPC11, CDC26/APC12, ANAPC13, ANAPC15 and ANAPC16 that assemble into a complex of at least 19 chains with a combined molecular mass of around 1.2 MDa; APC/C interacts with FZR1 and FBXO5 (By similarity). In the context of the APC/C complex, directly interacts with UBE2C and UBE2S (By similarity). Interacts (via cullin domain) with ANAPC11 and with UBCH10 (By similarity). Interacts with NEUROD2 (PubMed:19900895). Interacts with FBXO43; the interaction is direct.</text>
</comment>
<comment type="similarity">
    <text evidence="2">Belongs to the cullin family.</text>
</comment>
<reference key="1">
    <citation type="journal article" date="2005" name="Science">
        <title>The transcriptional landscape of the mammalian genome.</title>
        <authorList>
            <person name="Carninci P."/>
            <person name="Kasukawa T."/>
            <person name="Katayama S."/>
            <person name="Gough J."/>
            <person name="Frith M.C."/>
            <person name="Maeda N."/>
            <person name="Oyama R."/>
            <person name="Ravasi T."/>
            <person name="Lenhard B."/>
            <person name="Wells C."/>
            <person name="Kodzius R."/>
            <person name="Shimokawa K."/>
            <person name="Bajic V.B."/>
            <person name="Brenner S.E."/>
            <person name="Batalov S."/>
            <person name="Forrest A.R."/>
            <person name="Zavolan M."/>
            <person name="Davis M.J."/>
            <person name="Wilming L.G."/>
            <person name="Aidinis V."/>
            <person name="Allen J.E."/>
            <person name="Ambesi-Impiombato A."/>
            <person name="Apweiler R."/>
            <person name="Aturaliya R.N."/>
            <person name="Bailey T.L."/>
            <person name="Bansal M."/>
            <person name="Baxter L."/>
            <person name="Beisel K.W."/>
            <person name="Bersano T."/>
            <person name="Bono H."/>
            <person name="Chalk A.M."/>
            <person name="Chiu K.P."/>
            <person name="Choudhary V."/>
            <person name="Christoffels A."/>
            <person name="Clutterbuck D.R."/>
            <person name="Crowe M.L."/>
            <person name="Dalla E."/>
            <person name="Dalrymple B.P."/>
            <person name="de Bono B."/>
            <person name="Della Gatta G."/>
            <person name="di Bernardo D."/>
            <person name="Down T."/>
            <person name="Engstrom P."/>
            <person name="Fagiolini M."/>
            <person name="Faulkner G."/>
            <person name="Fletcher C.F."/>
            <person name="Fukushima T."/>
            <person name="Furuno M."/>
            <person name="Futaki S."/>
            <person name="Gariboldi M."/>
            <person name="Georgii-Hemming P."/>
            <person name="Gingeras T.R."/>
            <person name="Gojobori T."/>
            <person name="Green R.E."/>
            <person name="Gustincich S."/>
            <person name="Harbers M."/>
            <person name="Hayashi Y."/>
            <person name="Hensch T.K."/>
            <person name="Hirokawa N."/>
            <person name="Hill D."/>
            <person name="Huminiecki L."/>
            <person name="Iacono M."/>
            <person name="Ikeo K."/>
            <person name="Iwama A."/>
            <person name="Ishikawa T."/>
            <person name="Jakt M."/>
            <person name="Kanapin A."/>
            <person name="Katoh M."/>
            <person name="Kawasawa Y."/>
            <person name="Kelso J."/>
            <person name="Kitamura H."/>
            <person name="Kitano H."/>
            <person name="Kollias G."/>
            <person name="Krishnan S.P."/>
            <person name="Kruger A."/>
            <person name="Kummerfeld S.K."/>
            <person name="Kurochkin I.V."/>
            <person name="Lareau L.F."/>
            <person name="Lazarevic D."/>
            <person name="Lipovich L."/>
            <person name="Liu J."/>
            <person name="Liuni S."/>
            <person name="McWilliam S."/>
            <person name="Madan Babu M."/>
            <person name="Madera M."/>
            <person name="Marchionni L."/>
            <person name="Matsuda H."/>
            <person name="Matsuzawa S."/>
            <person name="Miki H."/>
            <person name="Mignone F."/>
            <person name="Miyake S."/>
            <person name="Morris K."/>
            <person name="Mottagui-Tabar S."/>
            <person name="Mulder N."/>
            <person name="Nakano N."/>
            <person name="Nakauchi H."/>
            <person name="Ng P."/>
            <person name="Nilsson R."/>
            <person name="Nishiguchi S."/>
            <person name="Nishikawa S."/>
            <person name="Nori F."/>
            <person name="Ohara O."/>
            <person name="Okazaki Y."/>
            <person name="Orlando V."/>
            <person name="Pang K.C."/>
            <person name="Pavan W.J."/>
            <person name="Pavesi G."/>
            <person name="Pesole G."/>
            <person name="Petrovsky N."/>
            <person name="Piazza S."/>
            <person name="Reed J."/>
            <person name="Reid J.F."/>
            <person name="Ring B.Z."/>
            <person name="Ringwald M."/>
            <person name="Rost B."/>
            <person name="Ruan Y."/>
            <person name="Salzberg S.L."/>
            <person name="Sandelin A."/>
            <person name="Schneider C."/>
            <person name="Schoenbach C."/>
            <person name="Sekiguchi K."/>
            <person name="Semple C.A."/>
            <person name="Seno S."/>
            <person name="Sessa L."/>
            <person name="Sheng Y."/>
            <person name="Shibata Y."/>
            <person name="Shimada H."/>
            <person name="Shimada K."/>
            <person name="Silva D."/>
            <person name="Sinclair B."/>
            <person name="Sperling S."/>
            <person name="Stupka E."/>
            <person name="Sugiura K."/>
            <person name="Sultana R."/>
            <person name="Takenaka Y."/>
            <person name="Taki K."/>
            <person name="Tammoja K."/>
            <person name="Tan S.L."/>
            <person name="Tang S."/>
            <person name="Taylor M.S."/>
            <person name="Tegner J."/>
            <person name="Teichmann S.A."/>
            <person name="Ueda H.R."/>
            <person name="van Nimwegen E."/>
            <person name="Verardo R."/>
            <person name="Wei C.L."/>
            <person name="Yagi K."/>
            <person name="Yamanishi H."/>
            <person name="Zabarovsky E."/>
            <person name="Zhu S."/>
            <person name="Zimmer A."/>
            <person name="Hide W."/>
            <person name="Bult C."/>
            <person name="Grimmond S.M."/>
            <person name="Teasdale R.D."/>
            <person name="Liu E.T."/>
            <person name="Brusic V."/>
            <person name="Quackenbush J."/>
            <person name="Wahlestedt C."/>
            <person name="Mattick J.S."/>
            <person name="Hume D.A."/>
            <person name="Kai C."/>
            <person name="Sasaki D."/>
            <person name="Tomaru Y."/>
            <person name="Fukuda S."/>
            <person name="Kanamori-Katayama M."/>
            <person name="Suzuki M."/>
            <person name="Aoki J."/>
            <person name="Arakawa T."/>
            <person name="Iida J."/>
            <person name="Imamura K."/>
            <person name="Itoh M."/>
            <person name="Kato T."/>
            <person name="Kawaji H."/>
            <person name="Kawagashira N."/>
            <person name="Kawashima T."/>
            <person name="Kojima M."/>
            <person name="Kondo S."/>
            <person name="Konno H."/>
            <person name="Nakano K."/>
            <person name="Ninomiya N."/>
            <person name="Nishio T."/>
            <person name="Okada M."/>
            <person name="Plessy C."/>
            <person name="Shibata K."/>
            <person name="Shiraki T."/>
            <person name="Suzuki S."/>
            <person name="Tagami M."/>
            <person name="Waki K."/>
            <person name="Watahiki A."/>
            <person name="Okamura-Oho Y."/>
            <person name="Suzuki H."/>
            <person name="Kawai J."/>
            <person name="Hayashizaki Y."/>
        </authorList>
    </citation>
    <scope>NUCLEOTIDE SEQUENCE [LARGE SCALE MRNA]</scope>
    <source>
        <strain>C57BL/6J</strain>
        <strain>NOD</strain>
        <tissue>Epididymis</tissue>
    </source>
</reference>
<reference key="2">
    <citation type="journal article" date="2009" name="PLoS Biol.">
        <title>Lineage-specific biology revealed by a finished genome assembly of the mouse.</title>
        <authorList>
            <person name="Church D.M."/>
            <person name="Goodstadt L."/>
            <person name="Hillier L.W."/>
            <person name="Zody M.C."/>
            <person name="Goldstein S."/>
            <person name="She X."/>
            <person name="Bult C.J."/>
            <person name="Agarwala R."/>
            <person name="Cherry J.L."/>
            <person name="DiCuccio M."/>
            <person name="Hlavina W."/>
            <person name="Kapustin Y."/>
            <person name="Meric P."/>
            <person name="Maglott D."/>
            <person name="Birtle Z."/>
            <person name="Marques A.C."/>
            <person name="Graves T."/>
            <person name="Zhou S."/>
            <person name="Teague B."/>
            <person name="Potamousis K."/>
            <person name="Churas C."/>
            <person name="Place M."/>
            <person name="Herschleb J."/>
            <person name="Runnheim R."/>
            <person name="Forrest D."/>
            <person name="Amos-Landgraf J."/>
            <person name="Schwartz D.C."/>
            <person name="Cheng Z."/>
            <person name="Lindblad-Toh K."/>
            <person name="Eichler E.E."/>
            <person name="Ponting C.P."/>
        </authorList>
    </citation>
    <scope>NUCLEOTIDE SEQUENCE [LARGE SCALE GENOMIC DNA]</scope>
    <source>
        <strain>C57BL/6J</strain>
    </source>
</reference>
<reference key="3">
    <citation type="journal article" date="2004" name="Genome Res.">
        <title>The status, quality, and expansion of the NIH full-length cDNA project: the Mammalian Gene Collection (MGC).</title>
        <authorList>
            <consortium name="The MGC Project Team"/>
        </authorList>
    </citation>
    <scope>NUCLEOTIDE SEQUENCE [LARGE SCALE MRNA]</scope>
</reference>
<reference key="4">
    <citation type="journal article" date="2007" name="J. Immunol.">
        <title>Quantitative time-resolved phosphoproteomic analysis of mast cell signaling.</title>
        <authorList>
            <person name="Cao L."/>
            <person name="Yu K."/>
            <person name="Banh C."/>
            <person name="Nguyen V."/>
            <person name="Ritz A."/>
            <person name="Raphael B.J."/>
            <person name="Kawakami Y."/>
            <person name="Kawakami T."/>
            <person name="Salomon A.R."/>
        </authorList>
    </citation>
    <scope>PHOSPHORYLATION [LARGE SCALE ANALYSIS] AT TYR-825</scope>
    <scope>IDENTIFICATION BY MASS SPECTROMETRY [LARGE SCALE ANALYSIS]</scope>
    <source>
        <tissue>Mast cell</tissue>
    </source>
</reference>
<reference key="5">
    <citation type="journal article" date="2009" name="Science">
        <title>A Cdc20-APC ubiquitin signaling pathway regulates presynaptic differentiation.</title>
        <authorList>
            <person name="Yang Y."/>
            <person name="Kim A.H."/>
            <person name="Yamada T."/>
            <person name="Wu B."/>
            <person name="Bilimoria P.M."/>
            <person name="Ikeuchi Y."/>
            <person name="de la Iglesia N."/>
            <person name="Shen J."/>
            <person name="Bonni A."/>
        </authorList>
    </citation>
    <scope>FUNCTION</scope>
    <scope>INTERACTION WITH NEUROD2</scope>
</reference>
<reference key="6">
    <citation type="journal article" date="2010" name="Cell">
        <title>A tissue-specific atlas of mouse protein phosphorylation and expression.</title>
        <authorList>
            <person name="Huttlin E.L."/>
            <person name="Jedrychowski M.P."/>
            <person name="Elias J.E."/>
            <person name="Goswami T."/>
            <person name="Rad R."/>
            <person name="Beausoleil S.A."/>
            <person name="Villen J."/>
            <person name="Haas W."/>
            <person name="Sowa M.E."/>
            <person name="Gygi S.P."/>
        </authorList>
    </citation>
    <scope>PHOSPHORYLATION [LARGE SCALE ANALYSIS] AT SER-549 AND SER-712</scope>
    <scope>IDENTIFICATION BY MASS SPECTROMETRY [LARGE SCALE ANALYSIS]</scope>
    <source>
        <tissue>Brain</tissue>
        <tissue>Kidney</tissue>
        <tissue>Lung</tissue>
        <tissue>Spleen</tissue>
        <tissue>Testis</tissue>
    </source>
</reference>
<keyword id="KW-0131">Cell cycle</keyword>
<keyword id="KW-0132">Cell division</keyword>
<keyword id="KW-0221">Differentiation</keyword>
<keyword id="KW-0498">Mitosis</keyword>
<keyword id="KW-0524">Neurogenesis</keyword>
<keyword id="KW-0597">Phosphoprotein</keyword>
<keyword id="KW-1185">Reference proteome</keyword>
<keyword id="KW-0833">Ubl conjugation pathway</keyword>
<accession>Q8BZQ7</accession>
<accession>Q3TCK5</accession>
<accession>Q8R2Q1</accession>
<sequence>MEAEGVAVAAAAAAAAAAATIIASDDCDSRPGQELLVAWNTVSTGLVPPAALGLASSRTSGAVPPKEEELRAAVEVLRGHGLHSVLEEWFVEVLQNDLQGNIATEFWNAIALRENSVDEPQCLGLLLDAFGLLESRLDPYLHSLELLEKWTRLGLLMGAGAQGLREKVHTMLRGVLFFSTPRTFQEMVQRLYGRFLRVYMQSKRKGEGGTDPELEGELDSRYARRRYYRLLQSPLCAGCGSDKQQCWCRQALEQFNQLSQVLHRLSLLERVCAEAVTTTLHQVTRERMEDRCRGEYERSFLREFHKWIERVVGWLGKVFLQDNPTRPTSPEAGNTLRRWRCHVQRFFYRIYATLRIEELFSIIRDFPDSRPAIEDLKYCLERTDQRQQLLVSLKVALETRLLHPGVNTCDIITLYISAIKALRVLDPSMVILEVACEPIRRYLRTREDTVRQIVAGLTGDSDGTGDLAVELSKTDPACLETGQDSEDDSGEPEDWVPDPVDADPVKSSSKRRSSDIISLLVSIYGSKDLFINEYRSLLADRLLHQFSFSPEREIRNVELLKLRFGEAPMHFCEVMLKDMADSRRINANIREEDEKRPVEEQPPFGVYAVILSSEFWPPFKDEKLEVPEDIRAALDVYCKKYEKLKAMRTLSWKHTLGLVTMDVELADRTLSVAVTPVQAVVLLYFQNQASWTLEELSKVVKMPVALLRRRMSVWLQQGVLREEPPGTFSVIEEERPQDRDNMVLIDSDDESDSGMASQADQKEEELLLFWAYIQAMLTNLESLSLERIYSMLRMFVMTGPALAEIDLQELQGYLQKKVRDQQLIYSAGVYRLPKNSN</sequence>
<dbReference type="EMBL" id="AK033784">
    <property type="protein sequence ID" value="BAC28472.1"/>
    <property type="molecule type" value="mRNA"/>
</dbReference>
<dbReference type="EMBL" id="AK170676">
    <property type="protein sequence ID" value="BAE41951.1"/>
    <property type="molecule type" value="mRNA"/>
</dbReference>
<dbReference type="EMBL" id="AL732309">
    <property type="status" value="NOT_ANNOTATED_CDS"/>
    <property type="molecule type" value="Genomic_DNA"/>
</dbReference>
<dbReference type="EMBL" id="BC027351">
    <property type="protein sequence ID" value="AAH27351.1"/>
    <property type="molecule type" value="mRNA"/>
</dbReference>
<dbReference type="EMBL" id="BC137583">
    <property type="protein sequence ID" value="AAI37584.1"/>
    <property type="molecule type" value="mRNA"/>
</dbReference>
<dbReference type="CCDS" id="CCDS15761.1"/>
<dbReference type="RefSeq" id="NP_780509.2">
    <property type="nucleotide sequence ID" value="NM_175300.4"/>
</dbReference>
<dbReference type="SMR" id="Q8BZQ7"/>
<dbReference type="BioGRID" id="221196">
    <property type="interactions" value="51"/>
</dbReference>
<dbReference type="CORUM" id="Q8BZQ7"/>
<dbReference type="FunCoup" id="Q8BZQ7">
    <property type="interactions" value="2844"/>
</dbReference>
<dbReference type="IntAct" id="Q8BZQ7">
    <property type="interactions" value="37"/>
</dbReference>
<dbReference type="MINT" id="Q8BZQ7"/>
<dbReference type="STRING" id="10090.ENSMUSP00000028341"/>
<dbReference type="GlyGen" id="Q8BZQ7">
    <property type="glycosylation" value="2 sites"/>
</dbReference>
<dbReference type="iPTMnet" id="Q8BZQ7"/>
<dbReference type="PhosphoSitePlus" id="Q8BZQ7"/>
<dbReference type="jPOST" id="Q8BZQ7"/>
<dbReference type="PaxDb" id="10090-ENSMUSP00000028341"/>
<dbReference type="ProteomicsDB" id="296407"/>
<dbReference type="Pumba" id="Q8BZQ7"/>
<dbReference type="Antibodypedia" id="4358">
    <property type="antibodies" value="304 antibodies from 32 providers"/>
</dbReference>
<dbReference type="DNASU" id="99152"/>
<dbReference type="Ensembl" id="ENSMUST00000028341.11">
    <property type="protein sequence ID" value="ENSMUSP00000028341.5"/>
    <property type="gene ID" value="ENSMUSG00000026965.13"/>
</dbReference>
<dbReference type="GeneID" id="99152"/>
<dbReference type="KEGG" id="mmu:99152"/>
<dbReference type="UCSC" id="uc008ird.2">
    <property type="organism name" value="mouse"/>
</dbReference>
<dbReference type="AGR" id="MGI:2139135"/>
<dbReference type="CTD" id="29882"/>
<dbReference type="MGI" id="MGI:2139135">
    <property type="gene designation" value="Anapc2"/>
</dbReference>
<dbReference type="VEuPathDB" id="HostDB:ENSMUSG00000026965"/>
<dbReference type="eggNOG" id="KOG2165">
    <property type="taxonomic scope" value="Eukaryota"/>
</dbReference>
<dbReference type="GeneTree" id="ENSGT00390000016127"/>
<dbReference type="HOGENOM" id="CLU_007149_2_0_1"/>
<dbReference type="InParanoid" id="Q8BZQ7"/>
<dbReference type="OMA" id="AAKWQES"/>
<dbReference type="OrthoDB" id="5581181at2759"/>
<dbReference type="PhylomeDB" id="Q8BZQ7"/>
<dbReference type="TreeFam" id="TF105442"/>
<dbReference type="Reactome" id="R-MMU-141430">
    <property type="pathway name" value="Inactivation of APC/C via direct inhibition of the APC/C complex"/>
</dbReference>
<dbReference type="Reactome" id="R-MMU-174048">
    <property type="pathway name" value="APC/C:Cdc20 mediated degradation of Cyclin B"/>
</dbReference>
<dbReference type="Reactome" id="R-MMU-174084">
    <property type="pathway name" value="Autodegradation of Cdh1 by Cdh1:APC/C"/>
</dbReference>
<dbReference type="Reactome" id="R-MMU-174154">
    <property type="pathway name" value="APC/C:Cdc20 mediated degradation of Securin"/>
</dbReference>
<dbReference type="Reactome" id="R-MMU-174178">
    <property type="pathway name" value="APC/C:Cdh1 mediated degradation of Cdc20 and other APC/C:Cdh1 targeted proteins in late mitosis/early G1"/>
</dbReference>
<dbReference type="Reactome" id="R-MMU-174184">
    <property type="pathway name" value="Cdc20:Phospho-APC/C mediated degradation of Cyclin A"/>
</dbReference>
<dbReference type="Reactome" id="R-MMU-176407">
    <property type="pathway name" value="Conversion from APC/C:Cdc20 to APC/C:Cdh1 in late anaphase"/>
</dbReference>
<dbReference type="Reactome" id="R-MMU-176408">
    <property type="pathway name" value="Regulation of APC/C activators between G1/S and early anaphase"/>
</dbReference>
<dbReference type="Reactome" id="R-MMU-176409">
    <property type="pathway name" value="APC/C:Cdc20 mediated degradation of mitotic proteins"/>
</dbReference>
<dbReference type="Reactome" id="R-MMU-176412">
    <property type="pathway name" value="Phosphorylation of the APC/C"/>
</dbReference>
<dbReference type="Reactome" id="R-MMU-179409">
    <property type="pathway name" value="APC-Cdc20 mediated degradation of Nek2A"/>
</dbReference>
<dbReference type="Reactome" id="R-MMU-2467813">
    <property type="pathway name" value="Separation of Sister Chromatids"/>
</dbReference>
<dbReference type="Reactome" id="R-MMU-2559582">
    <property type="pathway name" value="Senescence-Associated Secretory Phenotype (SASP)"/>
</dbReference>
<dbReference type="Reactome" id="R-MMU-68867">
    <property type="pathway name" value="Assembly of the pre-replicative complex"/>
</dbReference>
<dbReference type="Reactome" id="R-MMU-69017">
    <property type="pathway name" value="CDK-mediated phosphorylation and removal of Cdc6"/>
</dbReference>
<dbReference type="Reactome" id="R-MMU-983168">
    <property type="pathway name" value="Antigen processing: Ubiquitination &amp; Proteasome degradation"/>
</dbReference>
<dbReference type="UniPathway" id="UPA00143"/>
<dbReference type="BioGRID-ORCS" id="99152">
    <property type="hits" value="23 hits in 80 CRISPR screens"/>
</dbReference>
<dbReference type="ChiTaRS" id="Anapc2">
    <property type="organism name" value="mouse"/>
</dbReference>
<dbReference type="PRO" id="PR:Q8BZQ7"/>
<dbReference type="Proteomes" id="UP000000589">
    <property type="component" value="Chromosome 2"/>
</dbReference>
<dbReference type="RNAct" id="Q8BZQ7">
    <property type="molecule type" value="protein"/>
</dbReference>
<dbReference type="Bgee" id="ENSMUSG00000026965">
    <property type="expression patterns" value="Expressed in internal carotid artery and 273 other cell types or tissues"/>
</dbReference>
<dbReference type="ExpressionAtlas" id="Q8BZQ7">
    <property type="expression patterns" value="baseline and differential"/>
</dbReference>
<dbReference type="GO" id="GO:0005680">
    <property type="term" value="C:anaphase-promoting complex"/>
    <property type="evidence" value="ECO:0000250"/>
    <property type="project" value="UniProtKB"/>
</dbReference>
<dbReference type="GO" id="GO:0031625">
    <property type="term" value="F:ubiquitin protein ligase binding"/>
    <property type="evidence" value="ECO:0007669"/>
    <property type="project" value="InterPro"/>
</dbReference>
<dbReference type="GO" id="GO:0031145">
    <property type="term" value="P:anaphase-promoting complex-dependent catabolic process"/>
    <property type="evidence" value="ECO:0000250"/>
    <property type="project" value="UniProtKB"/>
</dbReference>
<dbReference type="GO" id="GO:0030154">
    <property type="term" value="P:cell differentiation"/>
    <property type="evidence" value="ECO:0007669"/>
    <property type="project" value="UniProtKB-KW"/>
</dbReference>
<dbReference type="GO" id="GO:0051301">
    <property type="term" value="P:cell division"/>
    <property type="evidence" value="ECO:0007669"/>
    <property type="project" value="UniProtKB-KW"/>
</dbReference>
<dbReference type="GO" id="GO:0010629">
    <property type="term" value="P:negative regulation of gene expression"/>
    <property type="evidence" value="ECO:0007669"/>
    <property type="project" value="Ensembl"/>
</dbReference>
<dbReference type="GO" id="GO:0007399">
    <property type="term" value="P:nervous system development"/>
    <property type="evidence" value="ECO:0007669"/>
    <property type="project" value="UniProtKB-KW"/>
</dbReference>
<dbReference type="GO" id="GO:0045773">
    <property type="term" value="P:positive regulation of axon extension"/>
    <property type="evidence" value="ECO:0007669"/>
    <property type="project" value="Ensembl"/>
</dbReference>
<dbReference type="GO" id="GO:0050775">
    <property type="term" value="P:positive regulation of dendrite morphogenesis"/>
    <property type="evidence" value="ECO:0007669"/>
    <property type="project" value="Ensembl"/>
</dbReference>
<dbReference type="GO" id="GO:0090129">
    <property type="term" value="P:positive regulation of synapse maturation"/>
    <property type="evidence" value="ECO:0000314"/>
    <property type="project" value="UniProtKB"/>
</dbReference>
<dbReference type="GO" id="GO:0031915">
    <property type="term" value="P:positive regulation of synaptic plasticity"/>
    <property type="evidence" value="ECO:0000314"/>
    <property type="project" value="UniProtKB"/>
</dbReference>
<dbReference type="GO" id="GO:0141198">
    <property type="term" value="P:protein branched polyubiquitination"/>
    <property type="evidence" value="ECO:0000250"/>
    <property type="project" value="UniProtKB"/>
</dbReference>
<dbReference type="GO" id="GO:0070979">
    <property type="term" value="P:protein K11-linked ubiquitination"/>
    <property type="evidence" value="ECO:0000250"/>
    <property type="project" value="UniProtKB"/>
</dbReference>
<dbReference type="GO" id="GO:0070936">
    <property type="term" value="P:protein K48-linked ubiquitination"/>
    <property type="evidence" value="ECO:0000250"/>
    <property type="project" value="UniProtKB"/>
</dbReference>
<dbReference type="FunFam" id="1.10.10.10:FF:000284">
    <property type="entry name" value="Anaphase-promoting complex subunit 2"/>
    <property type="match status" value="1"/>
</dbReference>
<dbReference type="FunFam" id="1.20.1310.10:FF:000027">
    <property type="entry name" value="Anaphase-promoting complex subunit 2"/>
    <property type="match status" value="1"/>
</dbReference>
<dbReference type="FunFam" id="3.30.230.130:FF:000008">
    <property type="entry name" value="anaphase-promoting complex subunit 2"/>
    <property type="match status" value="1"/>
</dbReference>
<dbReference type="Gene3D" id="1.20.1310.10">
    <property type="entry name" value="Cullin Repeats"/>
    <property type="match status" value="1"/>
</dbReference>
<dbReference type="Gene3D" id="3.30.230.130">
    <property type="entry name" value="Cullin, Chain C, Domain 2"/>
    <property type="match status" value="1"/>
</dbReference>
<dbReference type="Gene3D" id="1.10.10.10">
    <property type="entry name" value="Winged helix-like DNA-binding domain superfamily/Winged helix DNA-binding domain"/>
    <property type="match status" value="1"/>
</dbReference>
<dbReference type="InterPro" id="IPR044554">
    <property type="entry name" value="APC2-like"/>
</dbReference>
<dbReference type="InterPro" id="IPR014786">
    <property type="entry name" value="APC2_C"/>
</dbReference>
<dbReference type="InterPro" id="IPR016158">
    <property type="entry name" value="Cullin_homology"/>
</dbReference>
<dbReference type="InterPro" id="IPR036317">
    <property type="entry name" value="Cullin_homology_sf"/>
</dbReference>
<dbReference type="InterPro" id="IPR001373">
    <property type="entry name" value="Cullin_N"/>
</dbReference>
<dbReference type="InterPro" id="IPR036388">
    <property type="entry name" value="WH-like_DNA-bd_sf"/>
</dbReference>
<dbReference type="InterPro" id="IPR036390">
    <property type="entry name" value="WH_DNA-bd_sf"/>
</dbReference>
<dbReference type="PANTHER" id="PTHR45957">
    <property type="entry name" value="ANAPHASE-PROMOTING COMPLEX SUBUNIT 2"/>
    <property type="match status" value="1"/>
</dbReference>
<dbReference type="PANTHER" id="PTHR45957:SF1">
    <property type="entry name" value="ANAPHASE-PROMOTING COMPLEX SUBUNIT 2"/>
    <property type="match status" value="1"/>
</dbReference>
<dbReference type="Pfam" id="PF08672">
    <property type="entry name" value="ANAPC2"/>
    <property type="match status" value="1"/>
</dbReference>
<dbReference type="Pfam" id="PF00888">
    <property type="entry name" value="Cullin"/>
    <property type="match status" value="1"/>
</dbReference>
<dbReference type="SMART" id="SM01013">
    <property type="entry name" value="APC2"/>
    <property type="match status" value="1"/>
</dbReference>
<dbReference type="SMART" id="SM00182">
    <property type="entry name" value="CULLIN"/>
    <property type="match status" value="1"/>
</dbReference>
<dbReference type="SUPFAM" id="SSF75632">
    <property type="entry name" value="Cullin homology domain"/>
    <property type="match status" value="1"/>
</dbReference>
<dbReference type="SUPFAM" id="SSF46785">
    <property type="entry name" value="Winged helix' DNA-binding domain"/>
    <property type="match status" value="1"/>
</dbReference>
<dbReference type="PROSITE" id="PS50069">
    <property type="entry name" value="CULLIN_2"/>
    <property type="match status" value="1"/>
</dbReference>